<reference key="1">
    <citation type="submission" date="2004-11" db="EMBL/GenBank/DDBJ databases">
        <authorList>
            <consortium name="The German cDNA consortium"/>
        </authorList>
    </citation>
    <scope>NUCLEOTIDE SEQUENCE [LARGE SCALE MRNA]</scope>
    <source>
        <tissue>Heart</tissue>
    </source>
</reference>
<feature type="chain" id="PRO_0000229766" description="V-type proton ATPase subunit d 1">
    <location>
        <begin position="1"/>
        <end position="351"/>
    </location>
</feature>
<feature type="modified residue" description="Phosphotyrosine" evidence="1">
    <location>
        <position position="270"/>
    </location>
</feature>
<feature type="modified residue" description="Phosphoserine" evidence="1">
    <location>
        <position position="283"/>
    </location>
</feature>
<comment type="function">
    <text evidence="1 3 4">Subunit of the V0 complex of vacuolar(H+)-ATPase (V-ATPase), a multisubunit enzyme composed of a peripheral complex (V1) that hydrolyzes ATP and a membrane integral complex (V0) that translocates protons (By similarity). V-ATPase is responsible for acidifying and maintaining the pH of intracellular compartments and in some cell types, is targeted to the plasma membrane, where it is responsible for acidifying the extracellular environment (By similarity). May play a role in coupling of proton transport and ATP hydrolysis (By similarity). In aerobic conditions, involved in intracellular iron homeostasis, thus triggering the activity of Fe(2+) prolyl hydroxylase (PHD) enzymes, and leading to HIF1A hydroxylation and subsequent proteasomal degradation (By similarity). May play a role in cilium biogenesis through regulation of the transport and the localization of proteins to the cilium (By similarity).</text>
</comment>
<comment type="subunit">
    <text evidence="3">V-ATPase is a heteromultimeric enzyme made up of two complexes: the ATP-hydrolytic V1 complex and the proton translocation V0 complex (By similarity). The V1 complex consists of three catalytic AB heterodimers that form a heterohexamer, three peripheral stalks each consisting of EG heterodimers, one central rotor including subunits D and F, and the regulatory subunits C and H (By similarity). The proton translocation complex V0 consists of the proton transport subunit a, a ring of proteolipid subunits c9c'', rotary subunit d, subunits e and f, and the accessory subunits ATP6AP1/Ac45 and ATP6AP2/PRR (By similarity). Interacts with ATP6AP2; ATP6AP2 is a V-ATPase accessory protein and the interaction promotes v-ATPase complex assembly (By similarity). Interacts with TMEM9; TMEM9 is a v-ATPase assembly regulator and the interaction induces the interaction with ATP6AP2 (By similarity). Interacts with PIP4P1 (By similarity).</text>
</comment>
<comment type="subcellular location">
    <subcellularLocation>
        <location evidence="3">Membrane</location>
        <topology evidence="3">Peripheral membrane protein</topology>
        <orientation evidence="3">Cytoplasmic side</orientation>
    </subcellularLocation>
    <subcellularLocation>
        <location evidence="3">Lysosome membrane</location>
        <topology evidence="5">Peripheral membrane protein</topology>
    </subcellularLocation>
    <subcellularLocation>
        <location evidence="2">Cytoplasmic vesicle</location>
        <location evidence="2">Clathrin-coated vesicle membrane</location>
        <topology evidence="5">Peripheral membrane protein</topology>
    </subcellularLocation>
    <text evidence="4">Localizes to centrosome and the base of the cilium.</text>
</comment>
<comment type="similarity">
    <text evidence="5">Belongs to the V-ATPase V0D/AC39 subunit family.</text>
</comment>
<organism>
    <name type="scientific">Pongo abelii</name>
    <name type="common">Sumatran orangutan</name>
    <name type="synonym">Pongo pygmaeus abelii</name>
    <dbReference type="NCBI Taxonomy" id="9601"/>
    <lineage>
        <taxon>Eukaryota</taxon>
        <taxon>Metazoa</taxon>
        <taxon>Chordata</taxon>
        <taxon>Craniata</taxon>
        <taxon>Vertebrata</taxon>
        <taxon>Euteleostomi</taxon>
        <taxon>Mammalia</taxon>
        <taxon>Eutheria</taxon>
        <taxon>Euarchontoglires</taxon>
        <taxon>Primates</taxon>
        <taxon>Haplorrhini</taxon>
        <taxon>Catarrhini</taxon>
        <taxon>Hominidae</taxon>
        <taxon>Pongo</taxon>
    </lineage>
</organism>
<proteinExistence type="evidence at transcript level"/>
<sequence length="351" mass="40329">MSFFPELYFNVDNGYLEGLVRGLKAGVLSQADYLNLVQCETLEDLKLHLQSTDYGNFLANEASPLTVSVIDDRLKEKMVVEFRHMRNHAYEPLASFLDFITYSYMIDNVILLITGTLHQRSIAELVPKCHPLGSFEQMEAVNIAQTPAELYNAILVDTPLAAFFQDCISEQDLDEMNIEIIRNTLYKAYLESFYKFCTLLGGTTADAMCPILEFEADRRAFIITINSFGTELSKEDRAKLFPHCGRLYPEGLAQLARADDYEQVKNVADYYPEYKLLFEGAGSNPGDKTLEDRFFEHEVKLNKLAFLNQFHFGVFYAFVKLKEQECRNIVWIAECIAQRHRAKIDNYIPIF</sequence>
<name>VA0D1_PONAB</name>
<accession>Q5R6I1</accession>
<gene>
    <name type="primary">ATP6V0D1</name>
</gene>
<protein>
    <recommendedName>
        <fullName>V-type proton ATPase subunit d 1</fullName>
        <shortName>V-ATPase subunit d 1</shortName>
    </recommendedName>
    <alternativeName>
        <fullName>Vacuolar proton pump subunit d 1</fullName>
    </alternativeName>
</protein>
<keyword id="KW-0970">Cilium biogenesis/degradation</keyword>
<keyword id="KW-0968">Cytoplasmic vesicle</keyword>
<keyword id="KW-0375">Hydrogen ion transport</keyword>
<keyword id="KW-0406">Ion transport</keyword>
<keyword id="KW-0458">Lysosome</keyword>
<keyword id="KW-0472">Membrane</keyword>
<keyword id="KW-0597">Phosphoprotein</keyword>
<keyword id="KW-1185">Reference proteome</keyword>
<keyword id="KW-0813">Transport</keyword>
<dbReference type="EMBL" id="CR858860">
    <property type="protein sequence ID" value="CAH91060.1"/>
    <property type="molecule type" value="mRNA"/>
</dbReference>
<dbReference type="EMBL" id="CR860508">
    <property type="protein sequence ID" value="CAH92631.1"/>
    <property type="molecule type" value="mRNA"/>
</dbReference>
<dbReference type="RefSeq" id="NP_001126541.1">
    <property type="nucleotide sequence ID" value="NM_001133069.1"/>
</dbReference>
<dbReference type="SMR" id="Q5R6I1"/>
<dbReference type="FunCoup" id="Q5R6I1">
    <property type="interactions" value="2795"/>
</dbReference>
<dbReference type="STRING" id="9601.ENSPPYP00000008426"/>
<dbReference type="Ensembl" id="ENSPPYT00000008768.2">
    <property type="protein sequence ID" value="ENSPPYP00000008425.2"/>
    <property type="gene ID" value="ENSPPYG00000007458.2"/>
</dbReference>
<dbReference type="GeneID" id="100173531"/>
<dbReference type="KEGG" id="pon:100173531"/>
<dbReference type="CTD" id="9114"/>
<dbReference type="eggNOG" id="KOG2957">
    <property type="taxonomic scope" value="Eukaryota"/>
</dbReference>
<dbReference type="GeneTree" id="ENSGT00390000002200"/>
<dbReference type="InParanoid" id="Q5R6I1"/>
<dbReference type="OrthoDB" id="10250083at2759"/>
<dbReference type="Proteomes" id="UP000001595">
    <property type="component" value="Chromosome 16"/>
</dbReference>
<dbReference type="GO" id="GO:0030665">
    <property type="term" value="C:clathrin-coated vesicle membrane"/>
    <property type="evidence" value="ECO:0007669"/>
    <property type="project" value="UniProtKB-SubCell"/>
</dbReference>
<dbReference type="GO" id="GO:0005765">
    <property type="term" value="C:lysosomal membrane"/>
    <property type="evidence" value="ECO:0007669"/>
    <property type="project" value="UniProtKB-SubCell"/>
</dbReference>
<dbReference type="GO" id="GO:0000220">
    <property type="term" value="C:vacuolar proton-transporting V-type ATPase, V0 domain"/>
    <property type="evidence" value="ECO:0000250"/>
    <property type="project" value="UniProtKB"/>
</dbReference>
<dbReference type="GO" id="GO:0046961">
    <property type="term" value="F:proton-transporting ATPase activity, rotational mechanism"/>
    <property type="evidence" value="ECO:0007669"/>
    <property type="project" value="InterPro"/>
</dbReference>
<dbReference type="GO" id="GO:0036295">
    <property type="term" value="P:cellular response to increased oxygen levels"/>
    <property type="evidence" value="ECO:0000250"/>
    <property type="project" value="UniProtKB"/>
</dbReference>
<dbReference type="GO" id="GO:0060271">
    <property type="term" value="P:cilium assembly"/>
    <property type="evidence" value="ECO:0000250"/>
    <property type="project" value="UniProtKB"/>
</dbReference>
<dbReference type="GO" id="GO:0006879">
    <property type="term" value="P:intracellular iron ion homeostasis"/>
    <property type="evidence" value="ECO:0000250"/>
    <property type="project" value="UniProtKB"/>
</dbReference>
<dbReference type="FunFam" id="1.10.132.50:FF:000002">
    <property type="entry name" value="V-type proton ATPase subunit"/>
    <property type="match status" value="1"/>
</dbReference>
<dbReference type="FunFam" id="1.20.1690.10:FF:000001">
    <property type="entry name" value="V-type proton ATPase subunit"/>
    <property type="match status" value="1"/>
</dbReference>
<dbReference type="FunFam" id="1.20.1690.10:FF:000002">
    <property type="entry name" value="V-type proton ATPase subunit"/>
    <property type="match status" value="1"/>
</dbReference>
<dbReference type="Gene3D" id="1.10.132.50">
    <property type="entry name" value="ATP synthase (C/AC39) subunit, domain 3"/>
    <property type="match status" value="1"/>
</dbReference>
<dbReference type="Gene3D" id="1.20.1690.10">
    <property type="entry name" value="V-type ATP synthase subunit C domain"/>
    <property type="match status" value="2"/>
</dbReference>
<dbReference type="InterPro" id="IPR036079">
    <property type="entry name" value="ATPase_csu/dsu_sf"/>
</dbReference>
<dbReference type="InterPro" id="IPR002843">
    <property type="entry name" value="ATPase_V0-cplx_csu/dsu"/>
</dbReference>
<dbReference type="InterPro" id="IPR016727">
    <property type="entry name" value="ATPase_V0-cplx_dsu"/>
</dbReference>
<dbReference type="InterPro" id="IPR035067">
    <property type="entry name" value="V-type_ATPase_csu/dsu"/>
</dbReference>
<dbReference type="InterPro" id="IPR044911">
    <property type="entry name" value="V-type_ATPase_csu/dsu_dom_3"/>
</dbReference>
<dbReference type="PANTHER" id="PTHR11028">
    <property type="entry name" value="VACUOLAR ATP SYNTHASE SUBUNIT AC39"/>
    <property type="match status" value="1"/>
</dbReference>
<dbReference type="Pfam" id="PF01992">
    <property type="entry name" value="vATP-synt_AC39"/>
    <property type="match status" value="1"/>
</dbReference>
<dbReference type="PIRSF" id="PIRSF018497">
    <property type="entry name" value="V-ATP_synth_D"/>
    <property type="match status" value="1"/>
</dbReference>
<dbReference type="SUPFAM" id="SSF103486">
    <property type="entry name" value="V-type ATP synthase subunit C"/>
    <property type="match status" value="1"/>
</dbReference>
<evidence type="ECO:0000250" key="1">
    <source>
        <dbReference type="UniProtKB" id="P51863"/>
    </source>
</evidence>
<evidence type="ECO:0000250" key="2">
    <source>
        <dbReference type="UniProtKB" id="P61420"/>
    </source>
</evidence>
<evidence type="ECO:0000250" key="3">
    <source>
        <dbReference type="UniProtKB" id="P61421"/>
    </source>
</evidence>
<evidence type="ECO:0000250" key="4">
    <source>
        <dbReference type="UniProtKB" id="Q6PGV1"/>
    </source>
</evidence>
<evidence type="ECO:0000305" key="5"/>